<evidence type="ECO:0000255" key="1">
    <source>
        <dbReference type="HAMAP-Rule" id="MF_00149"/>
    </source>
</evidence>
<evidence type="ECO:0000256" key="2">
    <source>
        <dbReference type="SAM" id="MobiDB-lite"/>
    </source>
</evidence>
<sequence length="669" mass="73810">MPIQVLPPQLANQIAAGEVVERPASVVKELVENSLDAGATRIDIDIERGGAKLIRIRDNGSGIGKDELTLALARHATSKIATLDDLEAIVSMGFRGEALASISSVSRLTLTSRTAEQSEAWQAYAEGRDMAVTVKPAAHPVGTTLEVLDLFYNTPARRKFMRTEKTEFTHIDEVVRRIALARFDVAITLHHNGKLIRQYRAAPDKSQYERRLGNICGATFLQHALAVSWQHGDLTIHGWVADPVGAKQLPDMQYCYVNQRMMRDRLINHAIRQAYQDQLSDDQQPAYVLYLEIDPHQVDVNVHPAKHEVRFHQARLVHDFIYQAVMSVLQQASAPGLGMTSPETGKPVQWQQENRPAAGENHFAQPPRTDNSPSYGGKTPRAGHSGQAKESAYSGYQPENPYQKKQGDLYKALLQPADGAAGASNPSGEHISVPANRVMPPEVVVLSTVSHDSPPNRTAPDATTSSSKPRAPIESPLESQSNGFGRVLTVYPPCYALLEYHKGLAMLSLSVAERHLKAVQLTPSEEGLRAQPLLIPQRLTLSKSELSVLSAHHALLARFGIDVLVESQRATLRAVPLPLRQQNLQNLISELIGYLANYQTVETQQVEPGELASWMATRLQSEQESWSHSQAIQLLADVERLCPQLAKAPPSELLYMMDIHDAIKALKHE</sequence>
<comment type="function">
    <text evidence="1">This protein is involved in the repair of mismatches in DNA. It is required for dam-dependent methyl-directed DNA mismatch repair. May act as a 'molecular matchmaker', a protein that promotes the formation of a stable complex between two or more DNA-binding proteins in an ATP-dependent manner without itself being part of a final effector complex.</text>
</comment>
<comment type="similarity">
    <text evidence="1">Belongs to the DNA mismatch repair MutL/HexB family.</text>
</comment>
<protein>
    <recommendedName>
        <fullName evidence="1">DNA mismatch repair protein MutL</fullName>
    </recommendedName>
</protein>
<keyword id="KW-0227">DNA damage</keyword>
<keyword id="KW-0234">DNA repair</keyword>
<proteinExistence type="inferred from homology"/>
<organism>
    <name type="scientific">Pectobacterium carotovorum subsp. carotovorum (strain PC1)</name>
    <dbReference type="NCBI Taxonomy" id="561230"/>
    <lineage>
        <taxon>Bacteria</taxon>
        <taxon>Pseudomonadati</taxon>
        <taxon>Pseudomonadota</taxon>
        <taxon>Gammaproteobacteria</taxon>
        <taxon>Enterobacterales</taxon>
        <taxon>Pectobacteriaceae</taxon>
        <taxon>Pectobacterium</taxon>
    </lineage>
</organism>
<accession>C6DFJ9</accession>
<name>MUTL_PECCP</name>
<feature type="chain" id="PRO_1000203393" description="DNA mismatch repair protein MutL">
    <location>
        <begin position="1"/>
        <end position="669"/>
    </location>
</feature>
<feature type="region of interest" description="Disordered" evidence="2">
    <location>
        <begin position="354"/>
        <end position="402"/>
    </location>
</feature>
<feature type="region of interest" description="Disordered" evidence="2">
    <location>
        <begin position="448"/>
        <end position="479"/>
    </location>
</feature>
<feature type="compositionally biased region" description="Polar residues" evidence="2">
    <location>
        <begin position="448"/>
        <end position="468"/>
    </location>
</feature>
<reference key="1">
    <citation type="submission" date="2009-07" db="EMBL/GenBank/DDBJ databases">
        <title>Complete sequence of Pectobacterium carotovorum subsp. carotovorum PC1.</title>
        <authorList>
            <consortium name="US DOE Joint Genome Institute"/>
            <person name="Lucas S."/>
            <person name="Copeland A."/>
            <person name="Lapidus A."/>
            <person name="Glavina del Rio T."/>
            <person name="Tice H."/>
            <person name="Bruce D."/>
            <person name="Goodwin L."/>
            <person name="Pitluck S."/>
            <person name="Munk A.C."/>
            <person name="Brettin T."/>
            <person name="Detter J.C."/>
            <person name="Han C."/>
            <person name="Tapia R."/>
            <person name="Larimer F."/>
            <person name="Land M."/>
            <person name="Hauser L."/>
            <person name="Kyrpides N."/>
            <person name="Mikhailova N."/>
            <person name="Balakrishnan V."/>
            <person name="Glasner J."/>
            <person name="Perna N.T."/>
        </authorList>
    </citation>
    <scope>NUCLEOTIDE SEQUENCE [LARGE SCALE GENOMIC DNA]</scope>
    <source>
        <strain>PC1</strain>
    </source>
</reference>
<dbReference type="EMBL" id="CP001657">
    <property type="protein sequence ID" value="ACT14738.1"/>
    <property type="molecule type" value="Genomic_DNA"/>
</dbReference>
<dbReference type="RefSeq" id="WP_015841850.1">
    <property type="nucleotide sequence ID" value="NC_012917.1"/>
</dbReference>
<dbReference type="SMR" id="C6DFJ9"/>
<dbReference type="STRING" id="561230.PC1_3723"/>
<dbReference type="KEGG" id="pct:PC1_3723"/>
<dbReference type="eggNOG" id="COG0323">
    <property type="taxonomic scope" value="Bacteria"/>
</dbReference>
<dbReference type="HOGENOM" id="CLU_004131_5_1_6"/>
<dbReference type="OrthoDB" id="9763467at2"/>
<dbReference type="Proteomes" id="UP000002736">
    <property type="component" value="Chromosome"/>
</dbReference>
<dbReference type="GO" id="GO:0032300">
    <property type="term" value="C:mismatch repair complex"/>
    <property type="evidence" value="ECO:0007669"/>
    <property type="project" value="InterPro"/>
</dbReference>
<dbReference type="GO" id="GO:0005524">
    <property type="term" value="F:ATP binding"/>
    <property type="evidence" value="ECO:0007669"/>
    <property type="project" value="InterPro"/>
</dbReference>
<dbReference type="GO" id="GO:0016887">
    <property type="term" value="F:ATP hydrolysis activity"/>
    <property type="evidence" value="ECO:0007669"/>
    <property type="project" value="InterPro"/>
</dbReference>
<dbReference type="GO" id="GO:0140664">
    <property type="term" value="F:ATP-dependent DNA damage sensor activity"/>
    <property type="evidence" value="ECO:0007669"/>
    <property type="project" value="InterPro"/>
</dbReference>
<dbReference type="GO" id="GO:0030983">
    <property type="term" value="F:mismatched DNA binding"/>
    <property type="evidence" value="ECO:0007669"/>
    <property type="project" value="InterPro"/>
</dbReference>
<dbReference type="GO" id="GO:0006298">
    <property type="term" value="P:mismatch repair"/>
    <property type="evidence" value="ECO:0007669"/>
    <property type="project" value="UniProtKB-UniRule"/>
</dbReference>
<dbReference type="CDD" id="cd16926">
    <property type="entry name" value="HATPase_MutL-MLH-PMS-like"/>
    <property type="match status" value="1"/>
</dbReference>
<dbReference type="CDD" id="cd03482">
    <property type="entry name" value="MutL_Trans_MutL"/>
    <property type="match status" value="1"/>
</dbReference>
<dbReference type="FunFam" id="3.30.230.10:FF:000013">
    <property type="entry name" value="DNA mismatch repair endonuclease MutL"/>
    <property type="match status" value="1"/>
</dbReference>
<dbReference type="FunFam" id="3.30.565.10:FF:000003">
    <property type="entry name" value="DNA mismatch repair endonuclease MutL"/>
    <property type="match status" value="1"/>
</dbReference>
<dbReference type="Gene3D" id="3.30.230.10">
    <property type="match status" value="1"/>
</dbReference>
<dbReference type="Gene3D" id="3.30.565.10">
    <property type="entry name" value="Histidine kinase-like ATPase, C-terminal domain"/>
    <property type="match status" value="1"/>
</dbReference>
<dbReference type="Gene3D" id="3.30.1540.20">
    <property type="entry name" value="MutL, C-terminal domain, dimerisation subdomain"/>
    <property type="match status" value="1"/>
</dbReference>
<dbReference type="Gene3D" id="3.30.1370.100">
    <property type="entry name" value="MutL, C-terminal domain, regulatory subdomain"/>
    <property type="match status" value="1"/>
</dbReference>
<dbReference type="HAMAP" id="MF_00149">
    <property type="entry name" value="DNA_mis_repair"/>
    <property type="match status" value="1"/>
</dbReference>
<dbReference type="InterPro" id="IPR014762">
    <property type="entry name" value="DNA_mismatch_repair_CS"/>
</dbReference>
<dbReference type="InterPro" id="IPR020667">
    <property type="entry name" value="DNA_mismatch_repair_MutL"/>
</dbReference>
<dbReference type="InterPro" id="IPR013507">
    <property type="entry name" value="DNA_mismatch_S5_2-like"/>
</dbReference>
<dbReference type="InterPro" id="IPR036890">
    <property type="entry name" value="HATPase_C_sf"/>
</dbReference>
<dbReference type="InterPro" id="IPR002099">
    <property type="entry name" value="MutL/Mlh/PMS"/>
</dbReference>
<dbReference type="InterPro" id="IPR038973">
    <property type="entry name" value="MutL/Mlh/Pms-like"/>
</dbReference>
<dbReference type="InterPro" id="IPR014790">
    <property type="entry name" value="MutL_C"/>
</dbReference>
<dbReference type="InterPro" id="IPR042120">
    <property type="entry name" value="MutL_C_dimsub"/>
</dbReference>
<dbReference type="InterPro" id="IPR042121">
    <property type="entry name" value="MutL_C_regsub"/>
</dbReference>
<dbReference type="InterPro" id="IPR037198">
    <property type="entry name" value="MutL_C_sf"/>
</dbReference>
<dbReference type="InterPro" id="IPR020568">
    <property type="entry name" value="Ribosomal_Su5_D2-typ_SF"/>
</dbReference>
<dbReference type="InterPro" id="IPR014721">
    <property type="entry name" value="Ribsml_uS5_D2-typ_fold_subgr"/>
</dbReference>
<dbReference type="NCBIfam" id="TIGR00585">
    <property type="entry name" value="mutl"/>
    <property type="match status" value="1"/>
</dbReference>
<dbReference type="NCBIfam" id="NF000948">
    <property type="entry name" value="PRK00095.1-1"/>
    <property type="match status" value="1"/>
</dbReference>
<dbReference type="PANTHER" id="PTHR10073">
    <property type="entry name" value="DNA MISMATCH REPAIR PROTEIN MLH, PMS, MUTL"/>
    <property type="match status" value="1"/>
</dbReference>
<dbReference type="PANTHER" id="PTHR10073:SF12">
    <property type="entry name" value="DNA MISMATCH REPAIR PROTEIN MLH1"/>
    <property type="match status" value="1"/>
</dbReference>
<dbReference type="Pfam" id="PF01119">
    <property type="entry name" value="DNA_mis_repair"/>
    <property type="match status" value="1"/>
</dbReference>
<dbReference type="Pfam" id="PF13589">
    <property type="entry name" value="HATPase_c_3"/>
    <property type="match status" value="1"/>
</dbReference>
<dbReference type="Pfam" id="PF08676">
    <property type="entry name" value="MutL_C"/>
    <property type="match status" value="1"/>
</dbReference>
<dbReference type="SMART" id="SM01340">
    <property type="entry name" value="DNA_mis_repair"/>
    <property type="match status" value="1"/>
</dbReference>
<dbReference type="SMART" id="SM00853">
    <property type="entry name" value="MutL_C"/>
    <property type="match status" value="1"/>
</dbReference>
<dbReference type="SUPFAM" id="SSF55874">
    <property type="entry name" value="ATPase domain of HSP90 chaperone/DNA topoisomerase II/histidine kinase"/>
    <property type="match status" value="1"/>
</dbReference>
<dbReference type="SUPFAM" id="SSF118116">
    <property type="entry name" value="DNA mismatch repair protein MutL"/>
    <property type="match status" value="1"/>
</dbReference>
<dbReference type="SUPFAM" id="SSF54211">
    <property type="entry name" value="Ribosomal protein S5 domain 2-like"/>
    <property type="match status" value="1"/>
</dbReference>
<dbReference type="PROSITE" id="PS00058">
    <property type="entry name" value="DNA_MISMATCH_REPAIR_1"/>
    <property type="match status" value="1"/>
</dbReference>
<gene>
    <name evidence="1" type="primary">mutL</name>
    <name type="ordered locus">PC1_3723</name>
</gene>